<feature type="chain" id="PRO_1000215621" description="Serine/threonine transporter SstT">
    <location>
        <begin position="1"/>
        <end position="415"/>
    </location>
</feature>
<feature type="transmembrane region" description="Helical" evidence="1">
    <location>
        <begin position="21"/>
        <end position="41"/>
    </location>
</feature>
<feature type="transmembrane region" description="Helical" evidence="1">
    <location>
        <begin position="45"/>
        <end position="65"/>
    </location>
</feature>
<feature type="transmembrane region" description="Helical" evidence="1">
    <location>
        <begin position="83"/>
        <end position="103"/>
    </location>
</feature>
<feature type="transmembrane region" description="Helical" evidence="1">
    <location>
        <begin position="142"/>
        <end position="162"/>
    </location>
</feature>
<feature type="transmembrane region" description="Helical" evidence="1">
    <location>
        <begin position="193"/>
        <end position="213"/>
    </location>
</feature>
<feature type="transmembrane region" description="Helical" evidence="1">
    <location>
        <begin position="217"/>
        <end position="237"/>
    </location>
</feature>
<feature type="transmembrane region" description="Helical" evidence="1">
    <location>
        <begin position="299"/>
        <end position="319"/>
    </location>
</feature>
<feature type="transmembrane region" description="Helical" evidence="1">
    <location>
        <begin position="331"/>
        <end position="351"/>
    </location>
</feature>
<feature type="transmembrane region" description="Helical" evidence="1">
    <location>
        <begin position="358"/>
        <end position="378"/>
    </location>
</feature>
<sequence length="415" mass="43137">METQHSRFLQYITHGSLVKQILLGLAAGIILASLSTQAALAAGLLGTLFVGALKAVAPILVLMLVMASVANHQQGQKTNIRPILFLYLIGTFSAALIAVVLSVLFPSTLALNAQAADITPPSGIVEVLKGLLMSVVANPIHALLNANYIGILVWAVGLGLAFRHGSASTKNLISDASHAVTAIVRVVIRFAPLGIFGLVASTLAETGFGALWGYAHLLMVLIGGMLLVALVINPLIVYWKIRSNPYPLVLRCLRESGVTAFFTRSSAANIPVNMELCRKLNLNEDSYSVAIPLGATINMAGAAITITVLALAAVHTLGIEVDIATALLLSVVASICACGASGVAGGSLLLIPLACSMFGISNDIAMQVVAVGFIIGVLQDSAETALNSSTDVIFTAAVCQAEDAKLAEKERLNLL</sequence>
<dbReference type="EMBL" id="CP001657">
    <property type="protein sequence ID" value="ACT11588.1"/>
    <property type="molecule type" value="Genomic_DNA"/>
</dbReference>
<dbReference type="RefSeq" id="WP_012773240.1">
    <property type="nucleotide sequence ID" value="NC_012917.1"/>
</dbReference>
<dbReference type="SMR" id="C6DKF1"/>
<dbReference type="STRING" id="561230.PC1_0533"/>
<dbReference type="KEGG" id="pct:PC1_0533"/>
<dbReference type="eggNOG" id="COG3633">
    <property type="taxonomic scope" value="Bacteria"/>
</dbReference>
<dbReference type="HOGENOM" id="CLU_044581_0_0_6"/>
<dbReference type="OrthoDB" id="9768885at2"/>
<dbReference type="Proteomes" id="UP000002736">
    <property type="component" value="Chromosome"/>
</dbReference>
<dbReference type="GO" id="GO:0005886">
    <property type="term" value="C:plasma membrane"/>
    <property type="evidence" value="ECO:0007669"/>
    <property type="project" value="UniProtKB-SubCell"/>
</dbReference>
<dbReference type="GO" id="GO:0005295">
    <property type="term" value="F:neutral L-amino acid:sodium symporter activity"/>
    <property type="evidence" value="ECO:0007669"/>
    <property type="project" value="TreeGrafter"/>
</dbReference>
<dbReference type="GO" id="GO:0032329">
    <property type="term" value="P:serine transport"/>
    <property type="evidence" value="ECO:0007669"/>
    <property type="project" value="InterPro"/>
</dbReference>
<dbReference type="GO" id="GO:0015826">
    <property type="term" value="P:threonine transport"/>
    <property type="evidence" value="ECO:0007669"/>
    <property type="project" value="InterPro"/>
</dbReference>
<dbReference type="FunFam" id="1.10.3860.10:FF:000003">
    <property type="entry name" value="Serine/threonine transporter sstT"/>
    <property type="match status" value="1"/>
</dbReference>
<dbReference type="Gene3D" id="1.10.3860.10">
    <property type="entry name" value="Sodium:dicarboxylate symporter"/>
    <property type="match status" value="1"/>
</dbReference>
<dbReference type="HAMAP" id="MF_01582">
    <property type="entry name" value="Ser_Thr_transp_SstT"/>
    <property type="match status" value="1"/>
</dbReference>
<dbReference type="InterPro" id="IPR001991">
    <property type="entry name" value="Na-dicarboxylate_symporter"/>
</dbReference>
<dbReference type="InterPro" id="IPR036458">
    <property type="entry name" value="Na:dicarbo_symporter_sf"/>
</dbReference>
<dbReference type="InterPro" id="IPR023025">
    <property type="entry name" value="Ser_Thr_transp_SstT"/>
</dbReference>
<dbReference type="NCBIfam" id="NF010151">
    <property type="entry name" value="PRK13628.1"/>
    <property type="match status" value="1"/>
</dbReference>
<dbReference type="PANTHER" id="PTHR42865">
    <property type="entry name" value="PROTON/GLUTAMATE-ASPARTATE SYMPORTER"/>
    <property type="match status" value="1"/>
</dbReference>
<dbReference type="PANTHER" id="PTHR42865:SF8">
    <property type="entry name" value="SERINE_THREONINE TRANSPORTER SSTT"/>
    <property type="match status" value="1"/>
</dbReference>
<dbReference type="Pfam" id="PF00375">
    <property type="entry name" value="SDF"/>
    <property type="match status" value="1"/>
</dbReference>
<dbReference type="PRINTS" id="PR00173">
    <property type="entry name" value="EDTRNSPORT"/>
</dbReference>
<dbReference type="SUPFAM" id="SSF118215">
    <property type="entry name" value="Proton glutamate symport protein"/>
    <property type="match status" value="1"/>
</dbReference>
<dbReference type="PROSITE" id="PS00713">
    <property type="entry name" value="NA_DICARBOXYL_SYMP_1"/>
    <property type="match status" value="1"/>
</dbReference>
<gene>
    <name evidence="1" type="primary">sstT</name>
    <name type="ordered locus">PC1_0533</name>
</gene>
<reference key="1">
    <citation type="submission" date="2009-07" db="EMBL/GenBank/DDBJ databases">
        <title>Complete sequence of Pectobacterium carotovorum subsp. carotovorum PC1.</title>
        <authorList>
            <consortium name="US DOE Joint Genome Institute"/>
            <person name="Lucas S."/>
            <person name="Copeland A."/>
            <person name="Lapidus A."/>
            <person name="Glavina del Rio T."/>
            <person name="Tice H."/>
            <person name="Bruce D."/>
            <person name="Goodwin L."/>
            <person name="Pitluck S."/>
            <person name="Munk A.C."/>
            <person name="Brettin T."/>
            <person name="Detter J.C."/>
            <person name="Han C."/>
            <person name="Tapia R."/>
            <person name="Larimer F."/>
            <person name="Land M."/>
            <person name="Hauser L."/>
            <person name="Kyrpides N."/>
            <person name="Mikhailova N."/>
            <person name="Balakrishnan V."/>
            <person name="Glasner J."/>
            <person name="Perna N.T."/>
        </authorList>
    </citation>
    <scope>NUCLEOTIDE SEQUENCE [LARGE SCALE GENOMIC DNA]</scope>
    <source>
        <strain>PC1</strain>
    </source>
</reference>
<evidence type="ECO:0000255" key="1">
    <source>
        <dbReference type="HAMAP-Rule" id="MF_01582"/>
    </source>
</evidence>
<proteinExistence type="inferred from homology"/>
<name>SSTT_PECCP</name>
<protein>
    <recommendedName>
        <fullName evidence="1">Serine/threonine transporter SstT</fullName>
    </recommendedName>
    <alternativeName>
        <fullName evidence="1">Na(+)/serine-threonine symporter</fullName>
    </alternativeName>
</protein>
<comment type="function">
    <text evidence="1">Involved in the import of serine and threonine into the cell, with the concomitant import of sodium (symport system).</text>
</comment>
<comment type="catalytic activity">
    <reaction evidence="1">
        <text>L-serine(in) + Na(+)(in) = L-serine(out) + Na(+)(out)</text>
        <dbReference type="Rhea" id="RHEA:29575"/>
        <dbReference type="ChEBI" id="CHEBI:29101"/>
        <dbReference type="ChEBI" id="CHEBI:33384"/>
    </reaction>
    <physiologicalReaction direction="right-to-left" evidence="1">
        <dbReference type="Rhea" id="RHEA:29577"/>
    </physiologicalReaction>
</comment>
<comment type="catalytic activity">
    <reaction evidence="1">
        <text>L-threonine(in) + Na(+)(in) = L-threonine(out) + Na(+)(out)</text>
        <dbReference type="Rhea" id="RHEA:69999"/>
        <dbReference type="ChEBI" id="CHEBI:29101"/>
        <dbReference type="ChEBI" id="CHEBI:57926"/>
    </reaction>
    <physiologicalReaction direction="right-to-left" evidence="1">
        <dbReference type="Rhea" id="RHEA:70001"/>
    </physiologicalReaction>
</comment>
<comment type="subcellular location">
    <subcellularLocation>
        <location evidence="1">Cell inner membrane</location>
        <topology evidence="1">Multi-pass membrane protein</topology>
    </subcellularLocation>
</comment>
<comment type="similarity">
    <text evidence="1">Belongs to the dicarboxylate/amino acid:cation symporter (DAACS) (TC 2.A.23) family.</text>
</comment>
<accession>C6DKF1</accession>
<keyword id="KW-0029">Amino-acid transport</keyword>
<keyword id="KW-0997">Cell inner membrane</keyword>
<keyword id="KW-1003">Cell membrane</keyword>
<keyword id="KW-0472">Membrane</keyword>
<keyword id="KW-0769">Symport</keyword>
<keyword id="KW-0812">Transmembrane</keyword>
<keyword id="KW-1133">Transmembrane helix</keyword>
<keyword id="KW-0813">Transport</keyword>
<organism>
    <name type="scientific">Pectobacterium carotovorum subsp. carotovorum (strain PC1)</name>
    <dbReference type="NCBI Taxonomy" id="561230"/>
    <lineage>
        <taxon>Bacteria</taxon>
        <taxon>Pseudomonadati</taxon>
        <taxon>Pseudomonadota</taxon>
        <taxon>Gammaproteobacteria</taxon>
        <taxon>Enterobacterales</taxon>
        <taxon>Pectobacteriaceae</taxon>
        <taxon>Pectobacterium</taxon>
    </lineage>
</organism>